<comment type="function">
    <text evidence="1">Catalyzes the methylthiolation of an aspartic acid residue of ribosomal protein uS12.</text>
</comment>
<comment type="catalytic activity">
    <reaction evidence="1">
        <text>L-aspartate(89)-[ribosomal protein uS12]-hydrogen + (sulfur carrier)-SH + AH2 + 2 S-adenosyl-L-methionine = 3-methylsulfanyl-L-aspartate(89)-[ribosomal protein uS12]-hydrogen + (sulfur carrier)-H + 5'-deoxyadenosine + L-methionine + A + S-adenosyl-L-homocysteine + 2 H(+)</text>
        <dbReference type="Rhea" id="RHEA:37087"/>
        <dbReference type="Rhea" id="RHEA-COMP:10460"/>
        <dbReference type="Rhea" id="RHEA-COMP:10461"/>
        <dbReference type="Rhea" id="RHEA-COMP:14737"/>
        <dbReference type="Rhea" id="RHEA-COMP:14739"/>
        <dbReference type="ChEBI" id="CHEBI:13193"/>
        <dbReference type="ChEBI" id="CHEBI:15378"/>
        <dbReference type="ChEBI" id="CHEBI:17319"/>
        <dbReference type="ChEBI" id="CHEBI:17499"/>
        <dbReference type="ChEBI" id="CHEBI:29917"/>
        <dbReference type="ChEBI" id="CHEBI:29961"/>
        <dbReference type="ChEBI" id="CHEBI:57844"/>
        <dbReference type="ChEBI" id="CHEBI:57856"/>
        <dbReference type="ChEBI" id="CHEBI:59789"/>
        <dbReference type="ChEBI" id="CHEBI:64428"/>
        <dbReference type="ChEBI" id="CHEBI:73599"/>
        <dbReference type="EC" id="2.8.4.4"/>
    </reaction>
</comment>
<comment type="cofactor">
    <cofactor evidence="1">
        <name>[4Fe-4S] cluster</name>
        <dbReference type="ChEBI" id="CHEBI:49883"/>
    </cofactor>
    <text evidence="1">Binds 2 [4Fe-4S] clusters. One cluster is coordinated with 3 cysteines and an exchangeable S-adenosyl-L-methionine.</text>
</comment>
<comment type="subcellular location">
    <subcellularLocation>
        <location evidence="1">Cytoplasm</location>
    </subcellularLocation>
</comment>
<comment type="similarity">
    <text evidence="1">Belongs to the methylthiotransferase family. RimO subfamily.</text>
</comment>
<protein>
    <recommendedName>
        <fullName evidence="1">Ribosomal protein uS12 methylthiotransferase RimO</fullName>
        <shortName evidence="1">uS12 MTTase</shortName>
        <shortName evidence="1">uS12 methylthiotransferase</shortName>
        <ecNumber evidence="1">2.8.4.4</ecNumber>
    </recommendedName>
    <alternativeName>
        <fullName evidence="1">Ribosomal protein uS12 (aspartate-C(3))-methylthiotransferase</fullName>
    </alternativeName>
    <alternativeName>
        <fullName evidence="1">Ribosome maturation factor RimO</fullName>
    </alternativeName>
</protein>
<evidence type="ECO:0000255" key="1">
    <source>
        <dbReference type="HAMAP-Rule" id="MF_01865"/>
    </source>
</evidence>
<evidence type="ECO:0000255" key="2">
    <source>
        <dbReference type="PROSITE-ProRule" id="PRU01266"/>
    </source>
</evidence>
<proteinExistence type="inferred from homology"/>
<gene>
    <name evidence="1" type="primary">rimO</name>
    <name type="ordered locus">Mext_3910</name>
</gene>
<sequence length="448" mass="49512">MTATASPSDTKGAAAPRISFVSLGCPKALVDSERILTHLRAEGYELSRRHDGADVVIVNTCGFLDSAKAESLAAIGEAMAENGRVIVTGCMGAQPEEIREKYPNLLAVTGPQAYESVVAAVHEAVPPAHDPFLDLIPPQGVKLTPRHYAYLKISEGCNNRCTFCIIPSLRGDLVSRPAGDVLREAEKLVKAGVKELLVVSQDTSAYGIDTRYASSPWQDREVRARFYDLAKELGELGAWVRLHYVYPYPHVDEVIPLMAEGKILPYLDMPLQHASPSVLKRMRRPGNQEKQLDRIRRWREICPDLAIRSTFIVGFPGETDAEFEELLDWIREARLERVGCFEYEPVRGATANDLGLLVPPEVKAERKRRFMEAQSHVSLRLQRAKVGKRLSVIIDEAGPTGARGRSKADAPEIDGSVHVTSRRPVRPGDIVTVKIERADAYDLHGIAV</sequence>
<keyword id="KW-0004">4Fe-4S</keyword>
<keyword id="KW-0963">Cytoplasm</keyword>
<keyword id="KW-0408">Iron</keyword>
<keyword id="KW-0411">Iron-sulfur</keyword>
<keyword id="KW-0479">Metal-binding</keyword>
<keyword id="KW-0949">S-adenosyl-L-methionine</keyword>
<keyword id="KW-0808">Transferase</keyword>
<accession>A9W8D2</accession>
<dbReference type="EC" id="2.8.4.4" evidence="1"/>
<dbReference type="EMBL" id="CP000908">
    <property type="protein sequence ID" value="ABY32281.1"/>
    <property type="molecule type" value="Genomic_DNA"/>
</dbReference>
<dbReference type="RefSeq" id="WP_012255095.1">
    <property type="nucleotide sequence ID" value="NC_010172.1"/>
</dbReference>
<dbReference type="SMR" id="A9W8D2"/>
<dbReference type="KEGG" id="mex:Mext_3910"/>
<dbReference type="eggNOG" id="COG0621">
    <property type="taxonomic scope" value="Bacteria"/>
</dbReference>
<dbReference type="HOGENOM" id="CLU_018697_0_0_5"/>
<dbReference type="BioCyc" id="MEXT419610:MEXT_RS19630-MONOMER"/>
<dbReference type="GO" id="GO:0005829">
    <property type="term" value="C:cytosol"/>
    <property type="evidence" value="ECO:0007669"/>
    <property type="project" value="TreeGrafter"/>
</dbReference>
<dbReference type="GO" id="GO:0051539">
    <property type="term" value="F:4 iron, 4 sulfur cluster binding"/>
    <property type="evidence" value="ECO:0007669"/>
    <property type="project" value="UniProtKB-UniRule"/>
</dbReference>
<dbReference type="GO" id="GO:0035599">
    <property type="term" value="F:aspartic acid methylthiotransferase activity"/>
    <property type="evidence" value="ECO:0007669"/>
    <property type="project" value="TreeGrafter"/>
</dbReference>
<dbReference type="GO" id="GO:0046872">
    <property type="term" value="F:metal ion binding"/>
    <property type="evidence" value="ECO:0007669"/>
    <property type="project" value="UniProtKB-KW"/>
</dbReference>
<dbReference type="GO" id="GO:0103039">
    <property type="term" value="F:protein methylthiotransferase activity"/>
    <property type="evidence" value="ECO:0007669"/>
    <property type="project" value="UniProtKB-EC"/>
</dbReference>
<dbReference type="GO" id="GO:0006400">
    <property type="term" value="P:tRNA modification"/>
    <property type="evidence" value="ECO:0007669"/>
    <property type="project" value="InterPro"/>
</dbReference>
<dbReference type="CDD" id="cd01335">
    <property type="entry name" value="Radical_SAM"/>
    <property type="match status" value="1"/>
</dbReference>
<dbReference type="FunFam" id="2.40.50.140:FF:000060">
    <property type="entry name" value="Ribosomal protein S12 methylthiotransferase RimO"/>
    <property type="match status" value="1"/>
</dbReference>
<dbReference type="FunFam" id="3.40.50.12160:FF:000002">
    <property type="entry name" value="Ribosomal protein S12 methylthiotransferase RimO"/>
    <property type="match status" value="1"/>
</dbReference>
<dbReference type="FunFam" id="3.80.30.20:FF:000001">
    <property type="entry name" value="tRNA-2-methylthio-N(6)-dimethylallyladenosine synthase 2"/>
    <property type="match status" value="1"/>
</dbReference>
<dbReference type="Gene3D" id="3.40.50.12160">
    <property type="entry name" value="Methylthiotransferase, N-terminal domain"/>
    <property type="match status" value="1"/>
</dbReference>
<dbReference type="Gene3D" id="2.40.50.140">
    <property type="entry name" value="Nucleic acid-binding proteins"/>
    <property type="match status" value="1"/>
</dbReference>
<dbReference type="Gene3D" id="3.80.30.20">
    <property type="entry name" value="tm_1862 like domain"/>
    <property type="match status" value="1"/>
</dbReference>
<dbReference type="HAMAP" id="MF_01865">
    <property type="entry name" value="MTTase_RimO"/>
    <property type="match status" value="1"/>
</dbReference>
<dbReference type="InterPro" id="IPR006638">
    <property type="entry name" value="Elp3/MiaA/NifB-like_rSAM"/>
</dbReference>
<dbReference type="InterPro" id="IPR005839">
    <property type="entry name" value="Methylthiotransferase"/>
</dbReference>
<dbReference type="InterPro" id="IPR020612">
    <property type="entry name" value="Methylthiotransferase_CS"/>
</dbReference>
<dbReference type="InterPro" id="IPR013848">
    <property type="entry name" value="Methylthiotransferase_N"/>
</dbReference>
<dbReference type="InterPro" id="IPR038135">
    <property type="entry name" value="Methylthiotransferase_N_sf"/>
</dbReference>
<dbReference type="InterPro" id="IPR012340">
    <property type="entry name" value="NA-bd_OB-fold"/>
</dbReference>
<dbReference type="InterPro" id="IPR005840">
    <property type="entry name" value="Ribosomal_uS12_MeSTrfase_RimO"/>
</dbReference>
<dbReference type="InterPro" id="IPR007197">
    <property type="entry name" value="rSAM"/>
</dbReference>
<dbReference type="InterPro" id="IPR023404">
    <property type="entry name" value="rSAM_horseshoe"/>
</dbReference>
<dbReference type="InterPro" id="IPR002792">
    <property type="entry name" value="TRAM_dom"/>
</dbReference>
<dbReference type="NCBIfam" id="TIGR01125">
    <property type="entry name" value="30S ribosomal protein S12 methylthiotransferase RimO"/>
    <property type="match status" value="1"/>
</dbReference>
<dbReference type="NCBIfam" id="TIGR00089">
    <property type="entry name" value="MiaB/RimO family radical SAM methylthiotransferase"/>
    <property type="match status" value="1"/>
</dbReference>
<dbReference type="PANTHER" id="PTHR43837">
    <property type="entry name" value="RIBOSOMAL PROTEIN S12 METHYLTHIOTRANSFERASE RIMO"/>
    <property type="match status" value="1"/>
</dbReference>
<dbReference type="PANTHER" id="PTHR43837:SF1">
    <property type="entry name" value="RIBOSOMAL PROTEIN US12 METHYLTHIOTRANSFERASE RIMO"/>
    <property type="match status" value="1"/>
</dbReference>
<dbReference type="Pfam" id="PF04055">
    <property type="entry name" value="Radical_SAM"/>
    <property type="match status" value="1"/>
</dbReference>
<dbReference type="Pfam" id="PF18693">
    <property type="entry name" value="TRAM_2"/>
    <property type="match status" value="1"/>
</dbReference>
<dbReference type="Pfam" id="PF00919">
    <property type="entry name" value="UPF0004"/>
    <property type="match status" value="1"/>
</dbReference>
<dbReference type="SFLD" id="SFLDG01082">
    <property type="entry name" value="B12-binding_domain_containing"/>
    <property type="match status" value="1"/>
</dbReference>
<dbReference type="SFLD" id="SFLDG01061">
    <property type="entry name" value="methylthiotransferase"/>
    <property type="match status" value="1"/>
</dbReference>
<dbReference type="SFLD" id="SFLDF00274">
    <property type="entry name" value="ribosomal_protein_S12_methylth"/>
    <property type="match status" value="1"/>
</dbReference>
<dbReference type="SMART" id="SM00729">
    <property type="entry name" value="Elp3"/>
    <property type="match status" value="1"/>
</dbReference>
<dbReference type="SUPFAM" id="SSF102114">
    <property type="entry name" value="Radical SAM enzymes"/>
    <property type="match status" value="1"/>
</dbReference>
<dbReference type="PROSITE" id="PS51449">
    <property type="entry name" value="MTTASE_N"/>
    <property type="match status" value="1"/>
</dbReference>
<dbReference type="PROSITE" id="PS01278">
    <property type="entry name" value="MTTASE_RADICAL"/>
    <property type="match status" value="1"/>
</dbReference>
<dbReference type="PROSITE" id="PS51918">
    <property type="entry name" value="RADICAL_SAM"/>
    <property type="match status" value="1"/>
</dbReference>
<dbReference type="PROSITE" id="PS50926">
    <property type="entry name" value="TRAM"/>
    <property type="match status" value="1"/>
</dbReference>
<organism>
    <name type="scientific">Methylorubrum extorquens (strain PA1)</name>
    <name type="common">Methylobacterium extorquens</name>
    <dbReference type="NCBI Taxonomy" id="419610"/>
    <lineage>
        <taxon>Bacteria</taxon>
        <taxon>Pseudomonadati</taxon>
        <taxon>Pseudomonadota</taxon>
        <taxon>Alphaproteobacteria</taxon>
        <taxon>Hyphomicrobiales</taxon>
        <taxon>Methylobacteriaceae</taxon>
        <taxon>Methylorubrum</taxon>
    </lineage>
</organism>
<feature type="chain" id="PRO_0000374892" description="Ribosomal protein uS12 methylthiotransferase RimO">
    <location>
        <begin position="1"/>
        <end position="448"/>
    </location>
</feature>
<feature type="domain" description="MTTase N-terminal" evidence="1">
    <location>
        <begin position="16"/>
        <end position="126"/>
    </location>
</feature>
<feature type="domain" description="Radical SAM core" evidence="2">
    <location>
        <begin position="143"/>
        <end position="380"/>
    </location>
</feature>
<feature type="domain" description="TRAM" evidence="1">
    <location>
        <begin position="383"/>
        <end position="448"/>
    </location>
</feature>
<feature type="binding site" evidence="1">
    <location>
        <position position="25"/>
    </location>
    <ligand>
        <name>[4Fe-4S] cluster</name>
        <dbReference type="ChEBI" id="CHEBI:49883"/>
        <label>1</label>
    </ligand>
</feature>
<feature type="binding site" evidence="1">
    <location>
        <position position="61"/>
    </location>
    <ligand>
        <name>[4Fe-4S] cluster</name>
        <dbReference type="ChEBI" id="CHEBI:49883"/>
        <label>1</label>
    </ligand>
</feature>
<feature type="binding site" evidence="1">
    <location>
        <position position="90"/>
    </location>
    <ligand>
        <name>[4Fe-4S] cluster</name>
        <dbReference type="ChEBI" id="CHEBI:49883"/>
        <label>1</label>
    </ligand>
</feature>
<feature type="binding site" evidence="1">
    <location>
        <position position="157"/>
    </location>
    <ligand>
        <name>[4Fe-4S] cluster</name>
        <dbReference type="ChEBI" id="CHEBI:49883"/>
        <label>2</label>
        <note>4Fe-4S-S-AdoMet</note>
    </ligand>
</feature>
<feature type="binding site" evidence="1">
    <location>
        <position position="161"/>
    </location>
    <ligand>
        <name>[4Fe-4S] cluster</name>
        <dbReference type="ChEBI" id="CHEBI:49883"/>
        <label>2</label>
        <note>4Fe-4S-S-AdoMet</note>
    </ligand>
</feature>
<feature type="binding site" evidence="1">
    <location>
        <position position="164"/>
    </location>
    <ligand>
        <name>[4Fe-4S] cluster</name>
        <dbReference type="ChEBI" id="CHEBI:49883"/>
        <label>2</label>
        <note>4Fe-4S-S-AdoMet</note>
    </ligand>
</feature>
<name>RIMO_METEP</name>
<reference key="1">
    <citation type="submission" date="2007-12" db="EMBL/GenBank/DDBJ databases">
        <title>Complete sequence of Methylobacterium extorquens PA1.</title>
        <authorList>
            <consortium name="US DOE Joint Genome Institute"/>
            <person name="Copeland A."/>
            <person name="Lucas S."/>
            <person name="Lapidus A."/>
            <person name="Barry K."/>
            <person name="Glavina del Rio T."/>
            <person name="Dalin E."/>
            <person name="Tice H."/>
            <person name="Pitluck S."/>
            <person name="Saunders E."/>
            <person name="Brettin T."/>
            <person name="Bruce D."/>
            <person name="Detter J.C."/>
            <person name="Han C."/>
            <person name="Schmutz J."/>
            <person name="Larimer F."/>
            <person name="Land M."/>
            <person name="Hauser L."/>
            <person name="Kyrpides N."/>
            <person name="Kim E."/>
            <person name="Marx C."/>
            <person name="Richardson P."/>
        </authorList>
    </citation>
    <scope>NUCLEOTIDE SEQUENCE [LARGE SCALE GENOMIC DNA]</scope>
    <source>
        <strain>PA1</strain>
    </source>
</reference>